<name>IBD2_YEAS7</name>
<keyword id="KW-0131">Cell cycle</keyword>
<keyword id="KW-0132">Cell division</keyword>
<keyword id="KW-0963">Cytoplasm</keyword>
<keyword id="KW-0206">Cytoskeleton</keyword>
<keyword id="KW-0498">Mitosis</keyword>
<keyword id="KW-0597">Phosphoprotein</keyword>
<comment type="function">
    <text evidence="1">Part of a checkpoint which monitors spindle integrity and prevents premature exit from mitosis. This cell-cycle arrest depends upon inhibition of the G-protein TEM1 by the BFA1/BUB2 complex (By similarity).</text>
</comment>
<comment type="subunit">
    <text evidence="1">Interacts with BFA1.</text>
</comment>
<comment type="subcellular location">
    <subcellularLocation>
        <location evidence="1">Cytoplasm</location>
        <location evidence="1">Cytoskeleton</location>
        <location evidence="1">Spindle pole</location>
    </subcellularLocation>
</comment>
<comment type="similarity">
    <text evidence="4">Belongs to the IBD2 family.</text>
</comment>
<protein>
    <recommendedName>
        <fullName>Protein IBD2</fullName>
    </recommendedName>
    <alternativeName>
        <fullName>Inhibition of bud division protein 2</fullName>
    </alternativeName>
</protein>
<organism>
    <name type="scientific">Saccharomyces cerevisiae (strain YJM789)</name>
    <name type="common">Baker's yeast</name>
    <dbReference type="NCBI Taxonomy" id="307796"/>
    <lineage>
        <taxon>Eukaryota</taxon>
        <taxon>Fungi</taxon>
        <taxon>Dikarya</taxon>
        <taxon>Ascomycota</taxon>
        <taxon>Saccharomycotina</taxon>
        <taxon>Saccharomycetes</taxon>
        <taxon>Saccharomycetales</taxon>
        <taxon>Saccharomycetaceae</taxon>
        <taxon>Saccharomyces</taxon>
    </lineage>
</organism>
<proteinExistence type="inferred from homology"/>
<feature type="chain" id="PRO_0000333337" description="Protein IBD2">
    <location>
        <begin position="1"/>
        <end position="351"/>
    </location>
</feature>
<feature type="region of interest" description="Disordered" evidence="3">
    <location>
        <begin position="1"/>
        <end position="20"/>
    </location>
</feature>
<feature type="region of interest" description="Disordered" evidence="3">
    <location>
        <begin position="222"/>
        <end position="249"/>
    </location>
</feature>
<feature type="compositionally biased region" description="Polar residues" evidence="3">
    <location>
        <begin position="1"/>
        <end position="14"/>
    </location>
</feature>
<feature type="compositionally biased region" description="Basic residues" evidence="3">
    <location>
        <begin position="231"/>
        <end position="249"/>
    </location>
</feature>
<feature type="modified residue" description="Phosphoserine" evidence="2">
    <location>
        <position position="100"/>
    </location>
</feature>
<feature type="modified residue" description="Phosphoserine" evidence="2">
    <location>
        <position position="106"/>
    </location>
</feature>
<feature type="modified residue" description="Phosphothreonine" evidence="2">
    <location>
        <position position="211"/>
    </location>
</feature>
<reference key="1">
    <citation type="journal article" date="2007" name="Proc. Natl. Acad. Sci. U.S.A.">
        <title>Genome sequencing and comparative analysis of Saccharomyces cerevisiae strain YJM789.</title>
        <authorList>
            <person name="Wei W."/>
            <person name="McCusker J.H."/>
            <person name="Hyman R.W."/>
            <person name="Jones T."/>
            <person name="Ning Y."/>
            <person name="Cao Z."/>
            <person name="Gu Z."/>
            <person name="Bruno D."/>
            <person name="Miranda M."/>
            <person name="Nguyen M."/>
            <person name="Wilhelmy J."/>
            <person name="Komp C."/>
            <person name="Tamse R."/>
            <person name="Wang X."/>
            <person name="Jia P."/>
            <person name="Luedi P."/>
            <person name="Oefner P.J."/>
            <person name="David L."/>
            <person name="Dietrich F.S."/>
            <person name="Li Y."/>
            <person name="Davis R.W."/>
            <person name="Steinmetz L.M."/>
        </authorList>
    </citation>
    <scope>NUCLEOTIDE SEQUENCE [LARGE SCALE GENOMIC DNA]</scope>
    <source>
        <strain>YJM789</strain>
    </source>
</reference>
<sequence length="351" mass="39988">MTPTNQSSGTTNASVEVLSEDGPMPINVMMQEGVKALTKILSNQLQDRQAFQNAPHAMQFVIRNGGKALSNARLEELKDALPKMDSLSLEDELAKIDGQSAYHIDSAEEKETFESKIGQIASRNSADFIIEEDLQNILDDDLKDSELNLDGEEAEIIFDYESQELDTPDGIGEKISQMIESVLPGGFGSEEQGGLRTVTNVEDLDVAEEVTDIDHDTVDAARLHGDGKHSISSRKHSRSKNSKKNGHVRRHDFYDESRDHKSCCPHHHYENLSKLRNYYYHDFEYISKTENRVPDFSVLVNESSPMCLFCEYYMVFGEPPRNMIKWYNRTFGYNRMPNPPRDEQDSRKRNR</sequence>
<gene>
    <name type="primary">IBD2</name>
    <name type="ORF">SCY_4630</name>
</gene>
<evidence type="ECO:0000250" key="1"/>
<evidence type="ECO:0000250" key="2">
    <source>
        <dbReference type="UniProtKB" id="P53892"/>
    </source>
</evidence>
<evidence type="ECO:0000256" key="3">
    <source>
        <dbReference type="SAM" id="MobiDB-lite"/>
    </source>
</evidence>
<evidence type="ECO:0000305" key="4"/>
<dbReference type="EMBL" id="AAFW02000067">
    <property type="protein sequence ID" value="EDN62651.1"/>
    <property type="molecule type" value="Genomic_DNA"/>
</dbReference>
<dbReference type="HOGENOM" id="CLU_067888_0_0_1"/>
<dbReference type="Proteomes" id="UP000007060">
    <property type="component" value="Unassembled WGS sequence"/>
</dbReference>
<dbReference type="GO" id="GO:0005737">
    <property type="term" value="C:cytoplasm"/>
    <property type="evidence" value="ECO:0007669"/>
    <property type="project" value="UniProtKB-KW"/>
</dbReference>
<dbReference type="GO" id="GO:0000922">
    <property type="term" value="C:spindle pole"/>
    <property type="evidence" value="ECO:0007669"/>
    <property type="project" value="UniProtKB-SubCell"/>
</dbReference>
<dbReference type="GO" id="GO:0051301">
    <property type="term" value="P:cell division"/>
    <property type="evidence" value="ECO:0007669"/>
    <property type="project" value="UniProtKB-KW"/>
</dbReference>
<dbReference type="GO" id="GO:0007094">
    <property type="term" value="P:mitotic spindle assembly checkpoint signaling"/>
    <property type="evidence" value="ECO:0007669"/>
    <property type="project" value="InterPro"/>
</dbReference>
<dbReference type="InterPro" id="IPR026231">
    <property type="entry name" value="IBD2"/>
</dbReference>
<dbReference type="PRINTS" id="PR02099">
    <property type="entry name" value="PROTEINIBD2"/>
</dbReference>
<accession>A6ZRR9</accession>